<comment type="function">
    <text evidence="1">Component of the acetyl coenzyme A carboxylase (ACC) complex. First, biotin carboxylase catalyzes the carboxylation of biotin on its carrier protein (BCCP) and then the CO(2) group is transferred by the carboxyltransferase to acetyl-CoA to form malonyl-CoA.</text>
</comment>
<comment type="catalytic activity">
    <reaction evidence="1">
        <text>N(6)-carboxybiotinyl-L-lysyl-[protein] + acetyl-CoA = N(6)-biotinyl-L-lysyl-[protein] + malonyl-CoA</text>
        <dbReference type="Rhea" id="RHEA:54728"/>
        <dbReference type="Rhea" id="RHEA-COMP:10505"/>
        <dbReference type="Rhea" id="RHEA-COMP:10506"/>
        <dbReference type="ChEBI" id="CHEBI:57288"/>
        <dbReference type="ChEBI" id="CHEBI:57384"/>
        <dbReference type="ChEBI" id="CHEBI:83144"/>
        <dbReference type="ChEBI" id="CHEBI:83145"/>
        <dbReference type="EC" id="2.1.3.15"/>
    </reaction>
</comment>
<comment type="pathway">
    <text evidence="1">Lipid metabolism; malonyl-CoA biosynthesis; malonyl-CoA from acetyl-CoA: step 1/1.</text>
</comment>
<comment type="subunit">
    <text evidence="1">Acetyl-CoA carboxylase is a heterohexamer composed of biotin carboxyl carrier protein (AccB), biotin carboxylase (AccC) and two subunits each of ACCase subunit alpha (AccA) and ACCase subunit beta (AccD).</text>
</comment>
<comment type="subcellular location">
    <subcellularLocation>
        <location evidence="1">Cytoplasm</location>
    </subcellularLocation>
</comment>
<comment type="similarity">
    <text evidence="1">Belongs to the AccA family.</text>
</comment>
<accession>Q46GP3</accession>
<sequence length="329" mass="36332">MARRFLLEFEKPLVELENQIDQIRELARDSEVDVSQQLLQLETLAARRREEIFNALTPAQKIQVARHPQRPSTLDYIQMFCDDWVELHGDRNGTDDQALIGGLARIGEKSVLLIGQQKGRDTKENVARNFGMAKPGGYRKALRLMDHADRFNLPIISFIDTPGAYAGLIAEEQGQGEAIAVNLREMFRLKVPIIATVIGEGGSGGALGIGVADRLLMFEHSVYTVASPEACASILWRDAGKAPEAASALKITGPDLMKLGIVDEVLKEPSGGNNWAPLQAGDTLKNALEKHLSELLALSPDELRNNRYSKFRKMGKYLESQSIESEISV</sequence>
<feature type="chain" id="PRO_0000223803" description="Acetyl-coenzyme A carboxylase carboxyl transferase subunit alpha">
    <location>
        <begin position="1"/>
        <end position="329"/>
    </location>
</feature>
<feature type="domain" description="CoA carboxyltransferase C-terminal" evidence="2">
    <location>
        <begin position="40"/>
        <end position="294"/>
    </location>
</feature>
<evidence type="ECO:0000255" key="1">
    <source>
        <dbReference type="HAMAP-Rule" id="MF_00823"/>
    </source>
</evidence>
<evidence type="ECO:0000255" key="2">
    <source>
        <dbReference type="PROSITE-ProRule" id="PRU01137"/>
    </source>
</evidence>
<name>ACCA_PROMT</name>
<proteinExistence type="inferred from homology"/>
<protein>
    <recommendedName>
        <fullName evidence="1">Acetyl-coenzyme A carboxylase carboxyl transferase subunit alpha</fullName>
        <shortName evidence="1">ACCase subunit alpha</shortName>
        <shortName evidence="1">Acetyl-CoA carboxylase carboxyltransferase subunit alpha</shortName>
        <ecNumber evidence="1">2.1.3.15</ecNumber>
    </recommendedName>
</protein>
<organism>
    <name type="scientific">Prochlorococcus marinus (strain NATL2A)</name>
    <dbReference type="NCBI Taxonomy" id="59920"/>
    <lineage>
        <taxon>Bacteria</taxon>
        <taxon>Bacillati</taxon>
        <taxon>Cyanobacteriota</taxon>
        <taxon>Cyanophyceae</taxon>
        <taxon>Synechococcales</taxon>
        <taxon>Prochlorococcaceae</taxon>
        <taxon>Prochlorococcus</taxon>
    </lineage>
</organism>
<gene>
    <name evidence="1" type="primary">accA</name>
    <name type="ordered locus">PMN2A_1865</name>
</gene>
<dbReference type="EC" id="2.1.3.15" evidence="1"/>
<dbReference type="EMBL" id="CP000095">
    <property type="protein sequence ID" value="AAZ59353.1"/>
    <property type="molecule type" value="Genomic_DNA"/>
</dbReference>
<dbReference type="RefSeq" id="WP_011294497.1">
    <property type="nucleotide sequence ID" value="NC_007335.2"/>
</dbReference>
<dbReference type="SMR" id="Q46GP3"/>
<dbReference type="STRING" id="59920.PMN2A_1865"/>
<dbReference type="KEGG" id="pmn:PMN2A_1865"/>
<dbReference type="HOGENOM" id="CLU_015486_0_2_3"/>
<dbReference type="OrthoDB" id="9808023at2"/>
<dbReference type="PhylomeDB" id="Q46GP3"/>
<dbReference type="UniPathway" id="UPA00655">
    <property type="reaction ID" value="UER00711"/>
</dbReference>
<dbReference type="Proteomes" id="UP000002535">
    <property type="component" value="Chromosome"/>
</dbReference>
<dbReference type="GO" id="GO:0009317">
    <property type="term" value="C:acetyl-CoA carboxylase complex"/>
    <property type="evidence" value="ECO:0007669"/>
    <property type="project" value="InterPro"/>
</dbReference>
<dbReference type="GO" id="GO:0003989">
    <property type="term" value="F:acetyl-CoA carboxylase activity"/>
    <property type="evidence" value="ECO:0007669"/>
    <property type="project" value="InterPro"/>
</dbReference>
<dbReference type="GO" id="GO:0005524">
    <property type="term" value="F:ATP binding"/>
    <property type="evidence" value="ECO:0007669"/>
    <property type="project" value="UniProtKB-KW"/>
</dbReference>
<dbReference type="GO" id="GO:0016743">
    <property type="term" value="F:carboxyl- or carbamoyltransferase activity"/>
    <property type="evidence" value="ECO:0007669"/>
    <property type="project" value="UniProtKB-UniRule"/>
</dbReference>
<dbReference type="GO" id="GO:0006633">
    <property type="term" value="P:fatty acid biosynthetic process"/>
    <property type="evidence" value="ECO:0007669"/>
    <property type="project" value="UniProtKB-KW"/>
</dbReference>
<dbReference type="GO" id="GO:2001295">
    <property type="term" value="P:malonyl-CoA biosynthetic process"/>
    <property type="evidence" value="ECO:0007669"/>
    <property type="project" value="UniProtKB-UniRule"/>
</dbReference>
<dbReference type="Gene3D" id="3.90.226.10">
    <property type="entry name" value="2-enoyl-CoA Hydratase, Chain A, domain 1"/>
    <property type="match status" value="1"/>
</dbReference>
<dbReference type="HAMAP" id="MF_00823">
    <property type="entry name" value="AcetylCoA_CT_alpha"/>
    <property type="match status" value="1"/>
</dbReference>
<dbReference type="InterPro" id="IPR001095">
    <property type="entry name" value="Acetyl_CoA_COase_a_su"/>
</dbReference>
<dbReference type="InterPro" id="IPR029045">
    <property type="entry name" value="ClpP/crotonase-like_dom_sf"/>
</dbReference>
<dbReference type="InterPro" id="IPR011763">
    <property type="entry name" value="COA_CT_C"/>
</dbReference>
<dbReference type="NCBIfam" id="TIGR00513">
    <property type="entry name" value="accA"/>
    <property type="match status" value="1"/>
</dbReference>
<dbReference type="NCBIfam" id="NF041504">
    <property type="entry name" value="AccA_sub"/>
    <property type="match status" value="1"/>
</dbReference>
<dbReference type="NCBIfam" id="NF004344">
    <property type="entry name" value="PRK05724.1"/>
    <property type="match status" value="1"/>
</dbReference>
<dbReference type="PANTHER" id="PTHR42853">
    <property type="entry name" value="ACETYL-COENZYME A CARBOXYLASE CARBOXYL TRANSFERASE SUBUNIT ALPHA"/>
    <property type="match status" value="1"/>
</dbReference>
<dbReference type="PANTHER" id="PTHR42853:SF3">
    <property type="entry name" value="ACETYL-COENZYME A CARBOXYLASE CARBOXYL TRANSFERASE SUBUNIT ALPHA, CHLOROPLASTIC"/>
    <property type="match status" value="1"/>
</dbReference>
<dbReference type="Pfam" id="PF03255">
    <property type="entry name" value="ACCA"/>
    <property type="match status" value="1"/>
</dbReference>
<dbReference type="PRINTS" id="PR01069">
    <property type="entry name" value="ACCCTRFRASEA"/>
</dbReference>
<dbReference type="SUPFAM" id="SSF52096">
    <property type="entry name" value="ClpP/crotonase"/>
    <property type="match status" value="1"/>
</dbReference>
<dbReference type="PROSITE" id="PS50989">
    <property type="entry name" value="COA_CT_CTER"/>
    <property type="match status" value="1"/>
</dbReference>
<keyword id="KW-0067">ATP-binding</keyword>
<keyword id="KW-0963">Cytoplasm</keyword>
<keyword id="KW-0275">Fatty acid biosynthesis</keyword>
<keyword id="KW-0276">Fatty acid metabolism</keyword>
<keyword id="KW-0444">Lipid biosynthesis</keyword>
<keyword id="KW-0443">Lipid metabolism</keyword>
<keyword id="KW-0547">Nucleotide-binding</keyword>
<keyword id="KW-1185">Reference proteome</keyword>
<keyword id="KW-0808">Transferase</keyword>
<reference key="1">
    <citation type="journal article" date="2007" name="PLoS Genet.">
        <title>Patterns and implications of gene gain and loss in the evolution of Prochlorococcus.</title>
        <authorList>
            <person name="Kettler G.C."/>
            <person name="Martiny A.C."/>
            <person name="Huang K."/>
            <person name="Zucker J."/>
            <person name="Coleman M.L."/>
            <person name="Rodrigue S."/>
            <person name="Chen F."/>
            <person name="Lapidus A."/>
            <person name="Ferriera S."/>
            <person name="Johnson J."/>
            <person name="Steglich C."/>
            <person name="Church G.M."/>
            <person name="Richardson P."/>
            <person name="Chisholm S.W."/>
        </authorList>
    </citation>
    <scope>NUCLEOTIDE SEQUENCE [LARGE SCALE GENOMIC DNA]</scope>
    <source>
        <strain>NATL2A</strain>
    </source>
</reference>